<feature type="chain" id="PRO_0000136582" description="Probable arabinose 5-phosphate isomerase">
    <location>
        <begin position="1"/>
        <end position="337"/>
    </location>
</feature>
<feature type="domain" description="SIS" evidence="3">
    <location>
        <begin position="58"/>
        <end position="201"/>
    </location>
</feature>
<feature type="domain" description="CBS 1" evidence="2">
    <location>
        <begin position="227"/>
        <end position="284"/>
    </location>
</feature>
<feature type="domain" description="CBS 2" evidence="2">
    <location>
        <begin position="292"/>
        <end position="337"/>
    </location>
</feature>
<feature type="binding site" evidence="1">
    <location>
        <begin position="92"/>
        <end position="93"/>
    </location>
    <ligand>
        <name>substrate</name>
    </ligand>
</feature>
<feature type="binding site" evidence="1">
    <location>
        <position position="99"/>
    </location>
    <ligand>
        <name>substrate</name>
    </ligand>
</feature>
<feature type="binding site" evidence="1">
    <location>
        <position position="99"/>
    </location>
    <ligand>
        <name>Zn(2+)</name>
        <dbReference type="ChEBI" id="CHEBI:29105"/>
    </ligand>
</feature>
<feature type="binding site" evidence="1">
    <location>
        <position position="105"/>
    </location>
    <ligand>
        <name>substrate</name>
    </ligand>
</feature>
<feature type="binding site" evidence="1">
    <location>
        <begin position="131"/>
        <end position="140"/>
    </location>
    <ligand>
        <name>substrate</name>
    </ligand>
</feature>
<feature type="binding site" evidence="1">
    <location>
        <begin position="165"/>
        <end position="167"/>
    </location>
    <ligand>
        <name>substrate</name>
    </ligand>
</feature>
<feature type="binding site" evidence="1">
    <location>
        <position position="237"/>
    </location>
    <ligand>
        <name>substrate</name>
    </ligand>
</feature>
<feature type="binding site" evidence="1">
    <location>
        <position position="290"/>
    </location>
    <ligand>
        <name>substrate</name>
    </ligand>
</feature>
<feature type="site" description="Catalytically relevant" evidence="1">
    <location>
        <position position="76"/>
    </location>
</feature>
<feature type="site" description="Catalytically relevant" evidence="1">
    <location>
        <position position="128"/>
    </location>
</feature>
<feature type="site" description="Catalytically relevant" evidence="1">
    <location>
        <position position="169"/>
    </location>
</feature>
<feature type="site" description="Catalytically relevant" evidence="1">
    <location>
        <position position="210"/>
    </location>
</feature>
<accession>P45313</accession>
<organism>
    <name type="scientific">Haemophilus influenzae (strain ATCC 51907 / DSM 11121 / KW20 / Rd)</name>
    <dbReference type="NCBI Taxonomy" id="71421"/>
    <lineage>
        <taxon>Bacteria</taxon>
        <taxon>Pseudomonadati</taxon>
        <taxon>Pseudomonadota</taxon>
        <taxon>Gammaproteobacteria</taxon>
        <taxon>Pasteurellales</taxon>
        <taxon>Pasteurellaceae</taxon>
        <taxon>Haemophilus</taxon>
    </lineage>
</organism>
<evidence type="ECO:0000250" key="1"/>
<evidence type="ECO:0000255" key="2">
    <source>
        <dbReference type="PROSITE-ProRule" id="PRU00703"/>
    </source>
</evidence>
<evidence type="ECO:0000255" key="3">
    <source>
        <dbReference type="PROSITE-ProRule" id="PRU00797"/>
    </source>
</evidence>
<evidence type="ECO:0000305" key="4"/>
<comment type="function">
    <text evidence="1">Catalyzes the reversible aldol-ketol isomerization between D-ribulose 5-phosphate (Ru5P) and D-arabinose 5-phosphate (A5P).</text>
</comment>
<comment type="catalytic activity">
    <reaction>
        <text>D-arabinose 5-phosphate = D-ribulose 5-phosphate</text>
        <dbReference type="Rhea" id="RHEA:23104"/>
        <dbReference type="ChEBI" id="CHEBI:57693"/>
        <dbReference type="ChEBI" id="CHEBI:58121"/>
        <dbReference type="EC" id="5.3.1.13"/>
    </reaction>
</comment>
<comment type="similarity">
    <text evidence="4">Belongs to the SIS family. GutQ/KpsF subfamily.</text>
</comment>
<keyword id="KW-0119">Carbohydrate metabolism</keyword>
<keyword id="KW-0129">CBS domain</keyword>
<keyword id="KW-0413">Isomerase</keyword>
<keyword id="KW-0479">Metal-binding</keyword>
<keyword id="KW-1185">Reference proteome</keyword>
<keyword id="KW-0677">Repeat</keyword>
<keyword id="KW-0862">Zinc</keyword>
<dbReference type="EC" id="5.3.1.13"/>
<dbReference type="EMBL" id="L42023">
    <property type="protein sequence ID" value="AAC23324.1"/>
    <property type="molecule type" value="Genomic_DNA"/>
</dbReference>
<dbReference type="PIR" id="C64136">
    <property type="entry name" value="C64136"/>
</dbReference>
<dbReference type="RefSeq" id="NP_439820.1">
    <property type="nucleotide sequence ID" value="NC_000907.1"/>
</dbReference>
<dbReference type="SMR" id="P45313"/>
<dbReference type="STRING" id="71421.HI_1678"/>
<dbReference type="EnsemblBacteria" id="AAC23324">
    <property type="protein sequence ID" value="AAC23324"/>
    <property type="gene ID" value="HI_1678"/>
</dbReference>
<dbReference type="KEGG" id="hin:HI_1678"/>
<dbReference type="PATRIC" id="fig|71421.8.peg.1757"/>
<dbReference type="eggNOG" id="COG0517">
    <property type="taxonomic scope" value="Bacteria"/>
</dbReference>
<dbReference type="eggNOG" id="COG0794">
    <property type="taxonomic scope" value="Bacteria"/>
</dbReference>
<dbReference type="HOGENOM" id="CLU_040681_13_1_6"/>
<dbReference type="OrthoDB" id="9762536at2"/>
<dbReference type="PhylomeDB" id="P45313"/>
<dbReference type="BioCyc" id="HINF71421:G1GJ1-1694-MONOMER"/>
<dbReference type="Proteomes" id="UP000000579">
    <property type="component" value="Chromosome"/>
</dbReference>
<dbReference type="GO" id="GO:0019146">
    <property type="term" value="F:arabinose-5-phosphate isomerase activity"/>
    <property type="evidence" value="ECO:0007669"/>
    <property type="project" value="UniProtKB-EC"/>
</dbReference>
<dbReference type="GO" id="GO:0097367">
    <property type="term" value="F:carbohydrate derivative binding"/>
    <property type="evidence" value="ECO:0007669"/>
    <property type="project" value="InterPro"/>
</dbReference>
<dbReference type="GO" id="GO:0046872">
    <property type="term" value="F:metal ion binding"/>
    <property type="evidence" value="ECO:0007669"/>
    <property type="project" value="UniProtKB-KW"/>
</dbReference>
<dbReference type="GO" id="GO:1901135">
    <property type="term" value="P:carbohydrate derivative metabolic process"/>
    <property type="evidence" value="ECO:0007669"/>
    <property type="project" value="InterPro"/>
</dbReference>
<dbReference type="GO" id="GO:0005975">
    <property type="term" value="P:carbohydrate metabolic process"/>
    <property type="evidence" value="ECO:0007669"/>
    <property type="project" value="InterPro"/>
</dbReference>
<dbReference type="CDD" id="cd04604">
    <property type="entry name" value="CBS_pair_SIS_assoc"/>
    <property type="match status" value="1"/>
</dbReference>
<dbReference type="CDD" id="cd05014">
    <property type="entry name" value="SIS_Kpsf"/>
    <property type="match status" value="1"/>
</dbReference>
<dbReference type="FunFam" id="3.40.50.10490:FF:000011">
    <property type="entry name" value="Arabinose 5-phosphate isomerase"/>
    <property type="match status" value="1"/>
</dbReference>
<dbReference type="Gene3D" id="3.10.580.10">
    <property type="entry name" value="CBS-domain"/>
    <property type="match status" value="1"/>
</dbReference>
<dbReference type="Gene3D" id="3.40.50.10490">
    <property type="entry name" value="Glucose-6-phosphate isomerase like protein, domain 1"/>
    <property type="match status" value="1"/>
</dbReference>
<dbReference type="InterPro" id="IPR000644">
    <property type="entry name" value="CBS_dom"/>
</dbReference>
<dbReference type="InterPro" id="IPR046342">
    <property type="entry name" value="CBS_dom_sf"/>
</dbReference>
<dbReference type="InterPro" id="IPR050986">
    <property type="entry name" value="GutQ/KpsF_isomerases"/>
</dbReference>
<dbReference type="InterPro" id="IPR004800">
    <property type="entry name" value="KdsD/KpsF-type"/>
</dbReference>
<dbReference type="InterPro" id="IPR001347">
    <property type="entry name" value="SIS_dom"/>
</dbReference>
<dbReference type="InterPro" id="IPR046348">
    <property type="entry name" value="SIS_dom_sf"/>
</dbReference>
<dbReference type="InterPro" id="IPR035474">
    <property type="entry name" value="SIS_Kpsf"/>
</dbReference>
<dbReference type="NCBIfam" id="TIGR00393">
    <property type="entry name" value="kpsF"/>
    <property type="match status" value="1"/>
</dbReference>
<dbReference type="PANTHER" id="PTHR42745">
    <property type="match status" value="1"/>
</dbReference>
<dbReference type="PANTHER" id="PTHR42745:SF1">
    <property type="entry name" value="ARABINOSE 5-PHOSPHATE ISOMERASE KDSD"/>
    <property type="match status" value="1"/>
</dbReference>
<dbReference type="Pfam" id="PF00571">
    <property type="entry name" value="CBS"/>
    <property type="match status" value="2"/>
</dbReference>
<dbReference type="Pfam" id="PF01380">
    <property type="entry name" value="SIS"/>
    <property type="match status" value="1"/>
</dbReference>
<dbReference type="PIRSF" id="PIRSF004692">
    <property type="entry name" value="KdsD_KpsF"/>
    <property type="match status" value="1"/>
</dbReference>
<dbReference type="SMART" id="SM00116">
    <property type="entry name" value="CBS"/>
    <property type="match status" value="2"/>
</dbReference>
<dbReference type="SUPFAM" id="SSF53697">
    <property type="entry name" value="SIS domain"/>
    <property type="match status" value="1"/>
</dbReference>
<dbReference type="PROSITE" id="PS51371">
    <property type="entry name" value="CBS"/>
    <property type="match status" value="2"/>
</dbReference>
<dbReference type="PROSITE" id="PS51464">
    <property type="entry name" value="SIS"/>
    <property type="match status" value="1"/>
</dbReference>
<proteinExistence type="inferred from homology"/>
<gene>
    <name type="ordered locus">HI_1678</name>
</gene>
<reference key="1">
    <citation type="journal article" date="1995" name="Science">
        <title>Whole-genome random sequencing and assembly of Haemophilus influenzae Rd.</title>
        <authorList>
            <person name="Fleischmann R.D."/>
            <person name="Adams M.D."/>
            <person name="White O."/>
            <person name="Clayton R.A."/>
            <person name="Kirkness E.F."/>
            <person name="Kerlavage A.R."/>
            <person name="Bult C.J."/>
            <person name="Tomb J.-F."/>
            <person name="Dougherty B.A."/>
            <person name="Merrick J.M."/>
            <person name="McKenney K."/>
            <person name="Sutton G.G."/>
            <person name="FitzHugh W."/>
            <person name="Fields C.A."/>
            <person name="Gocayne J.D."/>
            <person name="Scott J.D."/>
            <person name="Shirley R."/>
            <person name="Liu L.-I."/>
            <person name="Glodek A."/>
            <person name="Kelley J.M."/>
            <person name="Weidman J.F."/>
            <person name="Phillips C.A."/>
            <person name="Spriggs T."/>
            <person name="Hedblom E."/>
            <person name="Cotton M.D."/>
            <person name="Utterback T.R."/>
            <person name="Hanna M.C."/>
            <person name="Nguyen D.T."/>
            <person name="Saudek D.M."/>
            <person name="Brandon R.C."/>
            <person name="Fine L.D."/>
            <person name="Fritchman J.L."/>
            <person name="Fuhrmann J.L."/>
            <person name="Geoghagen N.S.M."/>
            <person name="Gnehm C.L."/>
            <person name="McDonald L.A."/>
            <person name="Small K.V."/>
            <person name="Fraser C.M."/>
            <person name="Smith H.O."/>
            <person name="Venter J.C."/>
        </authorList>
    </citation>
    <scope>NUCLEOTIDE SEQUENCE [LARGE SCALE GENOMIC DNA]</scope>
    <source>
        <strain>ATCC 51907 / DSM 11121 / KW20 / Rd</strain>
    </source>
</reference>
<name>API_HAEIN</name>
<protein>
    <recommendedName>
        <fullName>Probable arabinose 5-phosphate isomerase</fullName>
        <shortName>API</shortName>
        <ecNumber>5.3.1.13</ecNumber>
    </recommendedName>
</protein>
<sequence>MPNFSFVFFYDSAKITPISTALLGRRMNYLKIAQDSLSVESNALLQLSQRLGDDFNQVIDLILACEGRLVIGGIGKSGLIGKKMVATFASTGTPSFFLHPTEAFHGDLGMLKPIDIVMLISYSGETDDVNKLIPSLKNFGNKIIAVTSNKNSTLARHADYVLDITVEREVCPNNLAPTTSALVTLALGDALAVSLITARNFQPADFAKFHPGGSLGRRLLCKVKDQMQTRLPTILPTTNFTDCLTVMNEGRMGVALVMENEQLKGIITDGDIRRALTANGAGTLNKTAKDFMTSSPKTIHQDEFLSKAEDFMKAKKIHSLVVVNDENHVVGLVEFSS</sequence>